<protein>
    <recommendedName>
        <fullName evidence="1">(4S)-4-hydroxy-5-phosphonooxypentane-2,3-dione isomerase</fullName>
        <ecNumber evidence="1">5.3.1.32</ecNumber>
    </recommendedName>
    <alternativeName>
        <fullName evidence="1">Autoinducer 2-degrading protein LsrG</fullName>
        <shortName evidence="1">AI-2-degrading protein LsrG</shortName>
    </alternativeName>
    <alternativeName>
        <fullName evidence="1">Phospho-(S)-4,5-dihydroxy-2,3-pentanedione isomerase</fullName>
    </alternativeName>
    <alternativeName>
        <fullName evidence="1">Phospho-AI-2 isomerase</fullName>
    </alternativeName>
</protein>
<proteinExistence type="inferred from homology"/>
<feature type="chain" id="PRO_0000351579" description="(4S)-4-hydroxy-5-phosphonooxypentane-2,3-dione isomerase">
    <location>
        <begin position="1"/>
        <end position="96"/>
    </location>
</feature>
<feature type="domain" description="ABM" evidence="1">
    <location>
        <begin position="2"/>
        <end position="91"/>
    </location>
</feature>
<accession>A9R0S7</accession>
<name>LSRG_YERPG</name>
<organism>
    <name type="scientific">Yersinia pestis bv. Antiqua (strain Angola)</name>
    <dbReference type="NCBI Taxonomy" id="349746"/>
    <lineage>
        <taxon>Bacteria</taxon>
        <taxon>Pseudomonadati</taxon>
        <taxon>Pseudomonadota</taxon>
        <taxon>Gammaproteobacteria</taxon>
        <taxon>Enterobacterales</taxon>
        <taxon>Yersiniaceae</taxon>
        <taxon>Yersinia</taxon>
    </lineage>
</organism>
<gene>
    <name evidence="1" type="primary">lsrG</name>
    <name type="ordered locus">YpAngola_A0863</name>
</gene>
<reference key="1">
    <citation type="journal article" date="2010" name="J. Bacteriol.">
        <title>Genome sequence of the deep-rooted Yersinia pestis strain Angola reveals new insights into the evolution and pangenome of the plague bacterium.</title>
        <authorList>
            <person name="Eppinger M."/>
            <person name="Worsham P.L."/>
            <person name="Nikolich M.P."/>
            <person name="Riley D.R."/>
            <person name="Sebastian Y."/>
            <person name="Mou S."/>
            <person name="Achtman M."/>
            <person name="Lindler L.E."/>
            <person name="Ravel J."/>
        </authorList>
    </citation>
    <scope>NUCLEOTIDE SEQUENCE [LARGE SCALE GENOMIC DNA]</scope>
    <source>
        <strain>Angola</strain>
    </source>
</reference>
<dbReference type="EC" id="5.3.1.32" evidence="1"/>
<dbReference type="EMBL" id="CP000901">
    <property type="protein sequence ID" value="ABX85378.1"/>
    <property type="molecule type" value="Genomic_DNA"/>
</dbReference>
<dbReference type="RefSeq" id="WP_002209186.1">
    <property type="nucleotide sequence ID" value="NZ_CP009935.1"/>
</dbReference>
<dbReference type="SMR" id="A9R0S7"/>
<dbReference type="GeneID" id="96664050"/>
<dbReference type="KEGG" id="ypg:YpAngola_A0863"/>
<dbReference type="PATRIC" id="fig|349746.12.peg.1814"/>
<dbReference type="GO" id="GO:0005829">
    <property type="term" value="C:cytosol"/>
    <property type="evidence" value="ECO:0007669"/>
    <property type="project" value="TreeGrafter"/>
</dbReference>
<dbReference type="GO" id="GO:0002952">
    <property type="term" value="F:(4S)-4-hydroxy-5-phosphonooxypentane-2,3-dione isomerase activity"/>
    <property type="evidence" value="ECO:0007669"/>
    <property type="project" value="UniProtKB-EC"/>
</dbReference>
<dbReference type="GO" id="GO:0016491">
    <property type="term" value="F:oxidoreductase activity"/>
    <property type="evidence" value="ECO:0007669"/>
    <property type="project" value="TreeGrafter"/>
</dbReference>
<dbReference type="FunFam" id="3.30.70.100:FF:000016">
    <property type="entry name" value="(4S)-4-hydroxy-5-phosphonooxypentane-2,3-dione isomerase"/>
    <property type="match status" value="1"/>
</dbReference>
<dbReference type="Gene3D" id="3.30.70.100">
    <property type="match status" value="1"/>
</dbReference>
<dbReference type="HAMAP" id="MF_02051">
    <property type="entry name" value="LsrG"/>
    <property type="match status" value="1"/>
</dbReference>
<dbReference type="InterPro" id="IPR007138">
    <property type="entry name" value="ABM_dom"/>
</dbReference>
<dbReference type="InterPro" id="IPR050744">
    <property type="entry name" value="AI-2_Isomerase_LsrG"/>
</dbReference>
<dbReference type="InterPro" id="IPR011008">
    <property type="entry name" value="Dimeric_a/b-barrel"/>
</dbReference>
<dbReference type="InterPro" id="IPR033672">
    <property type="entry name" value="LsrG"/>
</dbReference>
<dbReference type="NCBIfam" id="NF007791">
    <property type="entry name" value="PRK10486.1"/>
    <property type="match status" value="1"/>
</dbReference>
<dbReference type="PANTHER" id="PTHR33336:SF1">
    <property type="entry name" value="(4S)-4-HYDROXY-5-PHOSPHONOOXYPENTANE-2,3-DIONE ISOMERASE"/>
    <property type="match status" value="1"/>
</dbReference>
<dbReference type="PANTHER" id="PTHR33336">
    <property type="entry name" value="QUINOL MONOOXYGENASE YGIN-RELATED"/>
    <property type="match status" value="1"/>
</dbReference>
<dbReference type="Pfam" id="PF03992">
    <property type="entry name" value="ABM"/>
    <property type="match status" value="1"/>
</dbReference>
<dbReference type="SUPFAM" id="SSF54909">
    <property type="entry name" value="Dimeric alpha+beta barrel"/>
    <property type="match status" value="1"/>
</dbReference>
<dbReference type="PROSITE" id="PS51725">
    <property type="entry name" value="ABM"/>
    <property type="match status" value="1"/>
</dbReference>
<comment type="function">
    <text evidence="1">Involved in the degradation of phospho-AI-2, thereby terminating induction of the lsr operon and closing the AI-2 signaling cycle. Catalyzes the conversion of (4S)-4-hydroxy-5-phosphonooxypentane-2,3-dione (P-DPD) to 3-hydroxy-5-phosphonooxypentane-2,4-dione (P-HPD).</text>
</comment>
<comment type="catalytic activity">
    <reaction evidence="1">
        <text>(2S)-2-hydroxy-3,4-dioxopentyl phosphate = 3-hydroxy-2,4-dioxopentyl phosphate</text>
        <dbReference type="Rhea" id="RHEA:44360"/>
        <dbReference type="ChEBI" id="CHEBI:71677"/>
        <dbReference type="ChEBI" id="CHEBI:84359"/>
        <dbReference type="EC" id="5.3.1.32"/>
    </reaction>
</comment>
<comment type="subunit">
    <text evidence="1">Homodimer.</text>
</comment>
<comment type="subcellular location">
    <subcellularLocation>
        <location evidence="1">Cytoplasm</location>
    </subcellularLocation>
</comment>
<comment type="similarity">
    <text evidence="1">Belongs to the LsrG family.</text>
</comment>
<sequence length="96" mass="11098">MHVTLVEINVKEDKVDQFIEVFRANHLGSIREAGNLRFDVLRDEHIPTRFYIYEAYTDEAAVAIHKTTPHYLQCVEQLAPLMTGPRKKTVFIGLMP</sequence>
<evidence type="ECO:0000255" key="1">
    <source>
        <dbReference type="HAMAP-Rule" id="MF_02051"/>
    </source>
</evidence>
<keyword id="KW-0963">Cytoplasm</keyword>
<keyword id="KW-0413">Isomerase</keyword>